<keyword id="KW-0903">Direct protein sequencing</keyword>
<keyword id="KW-0349">Heme</keyword>
<keyword id="KW-0408">Iron</keyword>
<keyword id="KW-0479">Metal-binding</keyword>
<keyword id="KW-0561">Oxygen transport</keyword>
<keyword id="KW-0813">Transport</keyword>
<protein>
    <recommendedName>
        <fullName>Hemoglobin subunit alpha-A</fullName>
    </recommendedName>
    <alternativeName>
        <fullName>Alpha-A-globin</fullName>
    </alternativeName>
    <alternativeName>
        <fullName>Hemoglobin alpha-A chain</fullName>
    </alternativeName>
</protein>
<comment type="function">
    <text>Involved in oxygen transport from the lung to the various peripheral tissues.</text>
</comment>
<comment type="subunit">
    <text>Heterotetramer of two alpha chains and two beta chains.</text>
</comment>
<comment type="tissue specificity">
    <text>Red blood cells.</text>
</comment>
<comment type="similarity">
    <text evidence="1">Belongs to the globin family.</text>
</comment>
<gene>
    <name type="primary">HBAA</name>
</gene>
<name>HBA_EUDSC</name>
<accession>P19789</accession>
<reference key="1">
    <citation type="journal article" date="1991" name="J. Protein Chem.">
        <title>Primary structure of hemoglobin alpha-chain from cuckoo (Eudynamys scolopaceae, cuculiformes).</title>
        <authorList>
            <person name="Abbasi A."/>
            <person name="Zaidi Z.H."/>
        </authorList>
    </citation>
    <scope>PROTEIN SEQUENCE</scope>
</reference>
<proteinExistence type="evidence at protein level"/>
<dbReference type="PIR" id="A61425">
    <property type="entry name" value="A61425"/>
</dbReference>
<dbReference type="SMR" id="P19789"/>
<dbReference type="GO" id="GO:0072562">
    <property type="term" value="C:blood microparticle"/>
    <property type="evidence" value="ECO:0007669"/>
    <property type="project" value="TreeGrafter"/>
</dbReference>
<dbReference type="GO" id="GO:0031838">
    <property type="term" value="C:haptoglobin-hemoglobin complex"/>
    <property type="evidence" value="ECO:0007669"/>
    <property type="project" value="TreeGrafter"/>
</dbReference>
<dbReference type="GO" id="GO:0005833">
    <property type="term" value="C:hemoglobin complex"/>
    <property type="evidence" value="ECO:0007669"/>
    <property type="project" value="InterPro"/>
</dbReference>
<dbReference type="GO" id="GO:0031720">
    <property type="term" value="F:haptoglobin binding"/>
    <property type="evidence" value="ECO:0007669"/>
    <property type="project" value="TreeGrafter"/>
</dbReference>
<dbReference type="GO" id="GO:0020037">
    <property type="term" value="F:heme binding"/>
    <property type="evidence" value="ECO:0007669"/>
    <property type="project" value="InterPro"/>
</dbReference>
<dbReference type="GO" id="GO:0005506">
    <property type="term" value="F:iron ion binding"/>
    <property type="evidence" value="ECO:0007669"/>
    <property type="project" value="InterPro"/>
</dbReference>
<dbReference type="GO" id="GO:0043177">
    <property type="term" value="F:organic acid binding"/>
    <property type="evidence" value="ECO:0007669"/>
    <property type="project" value="TreeGrafter"/>
</dbReference>
<dbReference type="GO" id="GO:0019825">
    <property type="term" value="F:oxygen binding"/>
    <property type="evidence" value="ECO:0007669"/>
    <property type="project" value="InterPro"/>
</dbReference>
<dbReference type="GO" id="GO:0005344">
    <property type="term" value="F:oxygen carrier activity"/>
    <property type="evidence" value="ECO:0007669"/>
    <property type="project" value="UniProtKB-KW"/>
</dbReference>
<dbReference type="GO" id="GO:0004601">
    <property type="term" value="F:peroxidase activity"/>
    <property type="evidence" value="ECO:0007669"/>
    <property type="project" value="TreeGrafter"/>
</dbReference>
<dbReference type="GO" id="GO:0042744">
    <property type="term" value="P:hydrogen peroxide catabolic process"/>
    <property type="evidence" value="ECO:0007669"/>
    <property type="project" value="TreeGrafter"/>
</dbReference>
<dbReference type="CDD" id="cd08927">
    <property type="entry name" value="Hb-alpha-like"/>
    <property type="match status" value="1"/>
</dbReference>
<dbReference type="FunFam" id="1.10.490.10:FF:000002">
    <property type="entry name" value="Hemoglobin subunit alpha"/>
    <property type="match status" value="1"/>
</dbReference>
<dbReference type="Gene3D" id="1.10.490.10">
    <property type="entry name" value="Globins"/>
    <property type="match status" value="1"/>
</dbReference>
<dbReference type="InterPro" id="IPR000971">
    <property type="entry name" value="Globin"/>
</dbReference>
<dbReference type="InterPro" id="IPR009050">
    <property type="entry name" value="Globin-like_sf"/>
</dbReference>
<dbReference type="InterPro" id="IPR012292">
    <property type="entry name" value="Globin/Proto"/>
</dbReference>
<dbReference type="InterPro" id="IPR002338">
    <property type="entry name" value="Hemoglobin_a-typ"/>
</dbReference>
<dbReference type="InterPro" id="IPR050056">
    <property type="entry name" value="Hemoglobin_oxygen_transport"/>
</dbReference>
<dbReference type="InterPro" id="IPR002339">
    <property type="entry name" value="Hemoglobin_pi"/>
</dbReference>
<dbReference type="PANTHER" id="PTHR11442">
    <property type="entry name" value="HEMOGLOBIN FAMILY MEMBER"/>
    <property type="match status" value="1"/>
</dbReference>
<dbReference type="PANTHER" id="PTHR11442:SF48">
    <property type="entry name" value="HEMOGLOBIN SUBUNIT ALPHA"/>
    <property type="match status" value="1"/>
</dbReference>
<dbReference type="Pfam" id="PF00042">
    <property type="entry name" value="Globin"/>
    <property type="match status" value="1"/>
</dbReference>
<dbReference type="PRINTS" id="PR00612">
    <property type="entry name" value="ALPHAHAEM"/>
</dbReference>
<dbReference type="PRINTS" id="PR00815">
    <property type="entry name" value="PIHAEM"/>
</dbReference>
<dbReference type="SUPFAM" id="SSF46458">
    <property type="entry name" value="Globin-like"/>
    <property type="match status" value="1"/>
</dbReference>
<dbReference type="PROSITE" id="PS01033">
    <property type="entry name" value="GLOBIN"/>
    <property type="match status" value="1"/>
</dbReference>
<feature type="chain" id="PRO_0000052634" description="Hemoglobin subunit alpha-A">
    <location>
        <begin position="1"/>
        <end position="141"/>
    </location>
</feature>
<feature type="domain" description="Globin" evidence="1">
    <location>
        <begin position="1"/>
        <end position="141"/>
    </location>
</feature>
<feature type="binding site" evidence="1">
    <location>
        <position position="58"/>
    </location>
    <ligand>
        <name>O2</name>
        <dbReference type="ChEBI" id="CHEBI:15379"/>
    </ligand>
</feature>
<feature type="binding site" description="proximal binding residue" evidence="1">
    <location>
        <position position="87"/>
    </location>
    <ligand>
        <name>heme b</name>
        <dbReference type="ChEBI" id="CHEBI:60344"/>
    </ligand>
    <ligandPart>
        <name>Fe</name>
        <dbReference type="ChEBI" id="CHEBI:18248"/>
    </ligandPart>
</feature>
<organism>
    <name type="scientific">Eudynamys scolopaceus</name>
    <name type="common">Western koel</name>
    <name type="synonym">Cuculus scolopaceus</name>
    <dbReference type="NCBI Taxonomy" id="8945"/>
    <lineage>
        <taxon>Eukaryota</taxon>
        <taxon>Metazoa</taxon>
        <taxon>Chordata</taxon>
        <taxon>Craniata</taxon>
        <taxon>Vertebrata</taxon>
        <taxon>Euteleostomi</taxon>
        <taxon>Archelosauria</taxon>
        <taxon>Archosauria</taxon>
        <taxon>Dinosauria</taxon>
        <taxon>Saurischia</taxon>
        <taxon>Theropoda</taxon>
        <taxon>Coelurosauria</taxon>
        <taxon>Aves</taxon>
        <taxon>Neognathae</taxon>
        <taxon>Neoaves</taxon>
        <taxon>Otidimorphae</taxon>
        <taxon>Cuculiformes</taxon>
        <taxon>Cuculidae</taxon>
        <taxon>Eudynamys</taxon>
    </lineage>
</organism>
<evidence type="ECO:0000255" key="1">
    <source>
        <dbReference type="PROSITE-ProRule" id="PRU00238"/>
    </source>
</evidence>
<sequence length="141" mass="15175">VLSAADKTNVKGIFAKIGGHGDDYGAETLDRMFTVYPQTKTYFPHFDVSHGSAQIKAHGKKVVAALVEAVNHIDDIAGALSKLSDLHAHKLRVDPANFKLLGQCFLVVVGIHHASALTPEVHASLDKFLCAVSTVLTAKYR</sequence>